<comment type="function">
    <text evidence="1">Cell division factor that enhances FtsZ-ring assembly. Directly interacts with FtsZ and promotes bundling of FtsZ protofilaments, with a reduction in FtsZ GTPase activity.</text>
</comment>
<comment type="subunit">
    <text evidence="1">Interacts with FtsZ.</text>
</comment>
<comment type="subcellular location">
    <subcellularLocation>
        <location evidence="1">Cytoplasm</location>
    </subcellularLocation>
    <text evidence="1">Localizes to mid-cell in an FtsZ-dependent manner.</text>
</comment>
<comment type="similarity">
    <text evidence="1">Belongs to the ZapD family.</text>
</comment>
<proteinExistence type="inferred from homology"/>
<evidence type="ECO:0000255" key="1">
    <source>
        <dbReference type="HAMAP-Rule" id="MF_01092"/>
    </source>
</evidence>
<accession>A1V0Q3</accession>
<keyword id="KW-0131">Cell cycle</keyword>
<keyword id="KW-0132">Cell division</keyword>
<keyword id="KW-0963">Cytoplasm</keyword>
<keyword id="KW-0717">Septation</keyword>
<gene>
    <name evidence="1" type="primary">zapD</name>
    <name type="ordered locus">BMASAVP1_A0457</name>
</gene>
<dbReference type="EMBL" id="CP000526">
    <property type="protein sequence ID" value="ABM51254.1"/>
    <property type="molecule type" value="Genomic_DNA"/>
</dbReference>
<dbReference type="RefSeq" id="WP_004195118.1">
    <property type="nucleotide sequence ID" value="NC_008785.1"/>
</dbReference>
<dbReference type="SMR" id="A1V0Q3"/>
<dbReference type="GeneID" id="93061613"/>
<dbReference type="KEGG" id="bmv:BMASAVP1_A0457"/>
<dbReference type="HOGENOM" id="CLU_076303_0_1_4"/>
<dbReference type="GO" id="GO:0032153">
    <property type="term" value="C:cell division site"/>
    <property type="evidence" value="ECO:0007669"/>
    <property type="project" value="TreeGrafter"/>
</dbReference>
<dbReference type="GO" id="GO:0005737">
    <property type="term" value="C:cytoplasm"/>
    <property type="evidence" value="ECO:0007669"/>
    <property type="project" value="UniProtKB-SubCell"/>
</dbReference>
<dbReference type="GO" id="GO:0000917">
    <property type="term" value="P:division septum assembly"/>
    <property type="evidence" value="ECO:0007669"/>
    <property type="project" value="UniProtKB-KW"/>
</dbReference>
<dbReference type="GO" id="GO:0043093">
    <property type="term" value="P:FtsZ-dependent cytokinesis"/>
    <property type="evidence" value="ECO:0007669"/>
    <property type="project" value="UniProtKB-UniRule"/>
</dbReference>
<dbReference type="Gene3D" id="1.10.3900.10">
    <property type="entry name" value="YacF-like"/>
    <property type="match status" value="1"/>
</dbReference>
<dbReference type="Gene3D" id="2.60.440.10">
    <property type="entry name" value="YacF-like domains"/>
    <property type="match status" value="1"/>
</dbReference>
<dbReference type="HAMAP" id="MF_01092">
    <property type="entry name" value="ZapD"/>
    <property type="match status" value="1"/>
</dbReference>
<dbReference type="InterPro" id="IPR009777">
    <property type="entry name" value="ZapD"/>
</dbReference>
<dbReference type="InterPro" id="IPR027462">
    <property type="entry name" value="ZapD_C"/>
</dbReference>
<dbReference type="InterPro" id="IPR036268">
    <property type="entry name" value="ZapD_sf"/>
</dbReference>
<dbReference type="NCBIfam" id="NF003656">
    <property type="entry name" value="PRK05287.1-4"/>
    <property type="match status" value="1"/>
</dbReference>
<dbReference type="PANTHER" id="PTHR39455">
    <property type="entry name" value="CELL DIVISION PROTEIN ZAPD"/>
    <property type="match status" value="1"/>
</dbReference>
<dbReference type="PANTHER" id="PTHR39455:SF1">
    <property type="entry name" value="CELL DIVISION PROTEIN ZAPD"/>
    <property type="match status" value="1"/>
</dbReference>
<dbReference type="Pfam" id="PF07072">
    <property type="entry name" value="ZapD"/>
    <property type="match status" value="1"/>
</dbReference>
<dbReference type="SUPFAM" id="SSF160950">
    <property type="entry name" value="YacF-like"/>
    <property type="match status" value="1"/>
</dbReference>
<feature type="chain" id="PRO_1000064896" description="Cell division protein ZapD">
    <location>
        <begin position="1"/>
        <end position="251"/>
    </location>
</feature>
<reference key="1">
    <citation type="journal article" date="2010" name="Genome Biol. Evol.">
        <title>Continuing evolution of Burkholderia mallei through genome reduction and large-scale rearrangements.</title>
        <authorList>
            <person name="Losada L."/>
            <person name="Ronning C.M."/>
            <person name="DeShazer D."/>
            <person name="Woods D."/>
            <person name="Fedorova N."/>
            <person name="Kim H.S."/>
            <person name="Shabalina S.A."/>
            <person name="Pearson T.R."/>
            <person name="Brinkac L."/>
            <person name="Tan P."/>
            <person name="Nandi T."/>
            <person name="Crabtree J."/>
            <person name="Badger J."/>
            <person name="Beckstrom-Sternberg S."/>
            <person name="Saqib M."/>
            <person name="Schutzer S.E."/>
            <person name="Keim P."/>
            <person name="Nierman W.C."/>
        </authorList>
    </citation>
    <scope>NUCLEOTIDE SEQUENCE [LARGE SCALE GENOMIC DNA]</scope>
    <source>
        <strain>SAVP1</strain>
    </source>
</reference>
<organism>
    <name type="scientific">Burkholderia mallei (strain SAVP1)</name>
    <dbReference type="NCBI Taxonomy" id="320388"/>
    <lineage>
        <taxon>Bacteria</taxon>
        <taxon>Pseudomonadati</taxon>
        <taxon>Pseudomonadota</taxon>
        <taxon>Betaproteobacteria</taxon>
        <taxon>Burkholderiales</taxon>
        <taxon>Burkholderiaceae</taxon>
        <taxon>Burkholderia</taxon>
        <taxon>pseudomallei group</taxon>
    </lineage>
</organism>
<name>ZAPD_BURMS</name>
<protein>
    <recommendedName>
        <fullName evidence="1">Cell division protein ZapD</fullName>
    </recommendedName>
    <alternativeName>
        <fullName evidence="1">Z ring-associated protein D</fullName>
    </alternativeName>
</protein>
<sequence>MILYEYPFNERIRTLLRLEDLFERFTFFVAQEDAREHHVALTTLFEISEVAGRADLKSDLMKELERQRQTLAPFRGNPGIEQNALEAVLGEIEQTLANLAQMQGKTGQHLIDNEWLASIRSRAVIPGGTCKFDLPSYYAWQQWPAEQRRHDIAKWAMPLLPLRDAAMIVLRLARESGQASKVMAMQGSYQQMLSGRTYQLMQVRVPPELRVIPEASANKYMLWVRFTAQDGDVRPRAVDIDVPFQLTLCNL</sequence>